<name>COPB_STAEQ</name>
<gene>
    <name type="primary">copB</name>
    <name type="ordered locus">SERP2438</name>
</gene>
<reference key="1">
    <citation type="journal article" date="2005" name="J. Bacteriol.">
        <title>Insights on evolution of virulence and resistance from the complete genome analysis of an early methicillin-resistant Staphylococcus aureus strain and a biofilm-producing methicillin-resistant Staphylococcus epidermidis strain.</title>
        <authorList>
            <person name="Gill S.R."/>
            <person name="Fouts D.E."/>
            <person name="Archer G.L."/>
            <person name="Mongodin E.F."/>
            <person name="DeBoy R.T."/>
            <person name="Ravel J."/>
            <person name="Paulsen I.T."/>
            <person name="Kolonay J.F."/>
            <person name="Brinkac L.M."/>
            <person name="Beanan M.J."/>
            <person name="Dodson R.J."/>
            <person name="Daugherty S.C."/>
            <person name="Madupu R."/>
            <person name="Angiuoli S.V."/>
            <person name="Durkin A.S."/>
            <person name="Haft D.H."/>
            <person name="Vamathevan J.J."/>
            <person name="Khouri H."/>
            <person name="Utterback T.R."/>
            <person name="Lee C."/>
            <person name="Dimitrov G."/>
            <person name="Jiang L."/>
            <person name="Qin H."/>
            <person name="Weidman J."/>
            <person name="Tran K."/>
            <person name="Kang K.H."/>
            <person name="Hance I.R."/>
            <person name="Nelson K.E."/>
            <person name="Fraser C.M."/>
        </authorList>
    </citation>
    <scope>NUCLEOTIDE SEQUENCE [LARGE SCALE GENOMIC DNA]</scope>
    <source>
        <strain>ATCC 35984 / DSM 28319 / BCRC 17069 / CCUG 31568 / BM 3577 / RP62A</strain>
    </source>
</reference>
<feature type="chain" id="PRO_0000350607" description="Probable copper-transporting P-type ATPase B">
    <location>
        <begin position="1"/>
        <end position="674"/>
    </location>
</feature>
<feature type="transmembrane region" description="Helical" evidence="2">
    <location>
        <begin position="32"/>
        <end position="52"/>
    </location>
</feature>
<feature type="transmembrane region" description="Helical" evidence="2">
    <location>
        <begin position="57"/>
        <end position="77"/>
    </location>
</feature>
<feature type="transmembrane region" description="Helical" evidence="2">
    <location>
        <begin position="95"/>
        <end position="115"/>
    </location>
</feature>
<feature type="transmembrane region" description="Helical" evidence="2">
    <location>
        <begin position="127"/>
        <end position="147"/>
    </location>
</feature>
<feature type="transmembrane region" description="Helical" evidence="2">
    <location>
        <begin position="284"/>
        <end position="304"/>
    </location>
</feature>
<feature type="transmembrane region" description="Helical" evidence="2">
    <location>
        <begin position="315"/>
        <end position="335"/>
    </location>
</feature>
<feature type="transmembrane region" description="Helical" evidence="2">
    <location>
        <begin position="623"/>
        <end position="645"/>
    </location>
</feature>
<feature type="transmembrane region" description="Helical" evidence="2">
    <location>
        <begin position="649"/>
        <end position="671"/>
    </location>
</feature>
<feature type="region of interest" description="Disordered" evidence="3">
    <location>
        <begin position="1"/>
        <end position="22"/>
    </location>
</feature>
<feature type="compositionally biased region" description="Basic and acidic residues" evidence="3">
    <location>
        <begin position="7"/>
        <end position="16"/>
    </location>
</feature>
<feature type="active site" description="4-aspartylphosphate intermediate" evidence="1">
    <location>
        <position position="367"/>
    </location>
</feature>
<feature type="binding site" evidence="1">
    <location>
        <position position="565"/>
    </location>
    <ligand>
        <name>Mg(2+)</name>
        <dbReference type="ChEBI" id="CHEBI:18420"/>
    </ligand>
</feature>
<feature type="binding site" evidence="1">
    <location>
        <position position="569"/>
    </location>
    <ligand>
        <name>Mg(2+)</name>
        <dbReference type="ChEBI" id="CHEBI:18420"/>
    </ligand>
</feature>
<accession>Q5HKB0</accession>
<comment type="function">
    <text evidence="1">Involved in copper transport.</text>
</comment>
<comment type="catalytic activity">
    <reaction>
        <text>Cu(+)(in) + ATP + H2O = Cu(+)(out) + ADP + phosphate + H(+)</text>
        <dbReference type="Rhea" id="RHEA:25792"/>
        <dbReference type="ChEBI" id="CHEBI:15377"/>
        <dbReference type="ChEBI" id="CHEBI:15378"/>
        <dbReference type="ChEBI" id="CHEBI:30616"/>
        <dbReference type="ChEBI" id="CHEBI:43474"/>
        <dbReference type="ChEBI" id="CHEBI:49552"/>
        <dbReference type="ChEBI" id="CHEBI:456216"/>
        <dbReference type="EC" id="7.2.2.8"/>
    </reaction>
</comment>
<comment type="subcellular location">
    <subcellularLocation>
        <location evidence="1">Cell membrane</location>
        <topology evidence="1">Multi-pass membrane protein</topology>
    </subcellularLocation>
</comment>
<comment type="similarity">
    <text evidence="4">Belongs to the cation transport ATPase (P-type) (TC 3.A.3) family. Type IB subfamily.</text>
</comment>
<comment type="sequence caution" evidence="4">
    <conflict type="erroneous initiation">
        <sequence resource="EMBL-CDS" id="AAW53295"/>
    </conflict>
</comment>
<dbReference type="EC" id="7.2.2.8"/>
<dbReference type="EMBL" id="CP000029">
    <property type="protein sequence ID" value="AAW53295.1"/>
    <property type="status" value="ALT_INIT"/>
    <property type="molecule type" value="Genomic_DNA"/>
</dbReference>
<dbReference type="SMR" id="Q5HKB0"/>
<dbReference type="STRING" id="176279.SERP2438"/>
<dbReference type="KEGG" id="ser:SERP2438"/>
<dbReference type="eggNOG" id="COG2217">
    <property type="taxonomic scope" value="Bacteria"/>
</dbReference>
<dbReference type="HOGENOM" id="CLU_001771_11_2_9"/>
<dbReference type="Proteomes" id="UP000000531">
    <property type="component" value="Chromosome"/>
</dbReference>
<dbReference type="GO" id="GO:0005886">
    <property type="term" value="C:plasma membrane"/>
    <property type="evidence" value="ECO:0007669"/>
    <property type="project" value="UniProtKB-SubCell"/>
</dbReference>
<dbReference type="GO" id="GO:0005524">
    <property type="term" value="F:ATP binding"/>
    <property type="evidence" value="ECO:0007669"/>
    <property type="project" value="UniProtKB-KW"/>
</dbReference>
<dbReference type="GO" id="GO:0016887">
    <property type="term" value="F:ATP hydrolysis activity"/>
    <property type="evidence" value="ECO:0007669"/>
    <property type="project" value="InterPro"/>
</dbReference>
<dbReference type="GO" id="GO:0005507">
    <property type="term" value="F:copper ion binding"/>
    <property type="evidence" value="ECO:0007669"/>
    <property type="project" value="TreeGrafter"/>
</dbReference>
<dbReference type="GO" id="GO:0043682">
    <property type="term" value="F:P-type divalent copper transporter activity"/>
    <property type="evidence" value="ECO:0007669"/>
    <property type="project" value="TreeGrafter"/>
</dbReference>
<dbReference type="GO" id="GO:0140581">
    <property type="term" value="F:P-type monovalent copper transporter activity"/>
    <property type="evidence" value="ECO:0007669"/>
    <property type="project" value="UniProtKB-EC"/>
</dbReference>
<dbReference type="GO" id="GO:0055070">
    <property type="term" value="P:copper ion homeostasis"/>
    <property type="evidence" value="ECO:0007669"/>
    <property type="project" value="TreeGrafter"/>
</dbReference>
<dbReference type="CDD" id="cd07552">
    <property type="entry name" value="P-type_ATPase_Cu-like"/>
    <property type="match status" value="1"/>
</dbReference>
<dbReference type="FunFam" id="2.70.150.10:FF:000002">
    <property type="entry name" value="Copper-transporting ATPase 1, putative"/>
    <property type="match status" value="1"/>
</dbReference>
<dbReference type="Gene3D" id="3.40.1110.10">
    <property type="entry name" value="Calcium-transporting ATPase, cytoplasmic domain N"/>
    <property type="match status" value="1"/>
</dbReference>
<dbReference type="Gene3D" id="2.70.150.10">
    <property type="entry name" value="Calcium-transporting ATPase, cytoplasmic transduction domain A"/>
    <property type="match status" value="1"/>
</dbReference>
<dbReference type="Gene3D" id="3.40.50.1000">
    <property type="entry name" value="HAD superfamily/HAD-like"/>
    <property type="match status" value="1"/>
</dbReference>
<dbReference type="InterPro" id="IPR023299">
    <property type="entry name" value="ATPase_P-typ_cyto_dom_N"/>
</dbReference>
<dbReference type="InterPro" id="IPR018303">
    <property type="entry name" value="ATPase_P-typ_P_site"/>
</dbReference>
<dbReference type="InterPro" id="IPR023298">
    <property type="entry name" value="ATPase_P-typ_TM_dom_sf"/>
</dbReference>
<dbReference type="InterPro" id="IPR008250">
    <property type="entry name" value="ATPase_P-typ_transduc_dom_A_sf"/>
</dbReference>
<dbReference type="InterPro" id="IPR036412">
    <property type="entry name" value="HAD-like_sf"/>
</dbReference>
<dbReference type="InterPro" id="IPR023214">
    <property type="entry name" value="HAD_sf"/>
</dbReference>
<dbReference type="InterPro" id="IPR027256">
    <property type="entry name" value="P-typ_ATPase_IB"/>
</dbReference>
<dbReference type="InterPro" id="IPR001757">
    <property type="entry name" value="P_typ_ATPase"/>
</dbReference>
<dbReference type="InterPro" id="IPR044492">
    <property type="entry name" value="P_typ_ATPase_HD_dom"/>
</dbReference>
<dbReference type="NCBIfam" id="TIGR01511">
    <property type="entry name" value="ATPase-IB1_Cu"/>
    <property type="match status" value="1"/>
</dbReference>
<dbReference type="NCBIfam" id="TIGR01525">
    <property type="entry name" value="ATPase-IB_hvy"/>
    <property type="match status" value="1"/>
</dbReference>
<dbReference type="NCBIfam" id="TIGR01494">
    <property type="entry name" value="ATPase_P-type"/>
    <property type="match status" value="1"/>
</dbReference>
<dbReference type="PANTHER" id="PTHR43520">
    <property type="entry name" value="ATP7, ISOFORM B"/>
    <property type="match status" value="1"/>
</dbReference>
<dbReference type="PANTHER" id="PTHR43520:SF8">
    <property type="entry name" value="P-TYPE CU(+) TRANSPORTER"/>
    <property type="match status" value="1"/>
</dbReference>
<dbReference type="Pfam" id="PF00122">
    <property type="entry name" value="E1-E2_ATPase"/>
    <property type="match status" value="1"/>
</dbReference>
<dbReference type="Pfam" id="PF00702">
    <property type="entry name" value="Hydrolase"/>
    <property type="match status" value="1"/>
</dbReference>
<dbReference type="PRINTS" id="PR00119">
    <property type="entry name" value="CATATPASE"/>
</dbReference>
<dbReference type="PRINTS" id="PR00120">
    <property type="entry name" value="HATPASE"/>
</dbReference>
<dbReference type="SFLD" id="SFLDS00003">
    <property type="entry name" value="Haloacid_Dehalogenase"/>
    <property type="match status" value="1"/>
</dbReference>
<dbReference type="SFLD" id="SFLDF00027">
    <property type="entry name" value="p-type_atpase"/>
    <property type="match status" value="1"/>
</dbReference>
<dbReference type="SUPFAM" id="SSF81653">
    <property type="entry name" value="Calcium ATPase, transduction domain A"/>
    <property type="match status" value="1"/>
</dbReference>
<dbReference type="SUPFAM" id="SSF81665">
    <property type="entry name" value="Calcium ATPase, transmembrane domain M"/>
    <property type="match status" value="1"/>
</dbReference>
<dbReference type="SUPFAM" id="SSF56784">
    <property type="entry name" value="HAD-like"/>
    <property type="match status" value="1"/>
</dbReference>
<dbReference type="PROSITE" id="PS00154">
    <property type="entry name" value="ATPASE_E1_E2"/>
    <property type="match status" value="1"/>
</dbReference>
<protein>
    <recommendedName>
        <fullName>Probable copper-transporting P-type ATPase B</fullName>
        <ecNumber>7.2.2.8</ecNumber>
    </recommendedName>
</protein>
<organism>
    <name type="scientific">Staphylococcus epidermidis (strain ATCC 35984 / DSM 28319 / BCRC 17069 / CCUG 31568 / BM 3577 / RP62A)</name>
    <dbReference type="NCBI Taxonomy" id="176279"/>
    <lineage>
        <taxon>Bacteria</taxon>
        <taxon>Bacillati</taxon>
        <taxon>Bacillota</taxon>
        <taxon>Bacilli</taxon>
        <taxon>Bacillales</taxon>
        <taxon>Staphylococcaceae</taxon>
        <taxon>Staphylococcus</taxon>
    </lineage>
</organism>
<keyword id="KW-0067">ATP-binding</keyword>
<keyword id="KW-1003">Cell membrane</keyword>
<keyword id="KW-0186">Copper</keyword>
<keyword id="KW-0187">Copper transport</keyword>
<keyword id="KW-0406">Ion transport</keyword>
<keyword id="KW-0460">Magnesium</keyword>
<keyword id="KW-0472">Membrane</keyword>
<keyword id="KW-0479">Metal-binding</keyword>
<keyword id="KW-0547">Nucleotide-binding</keyword>
<keyword id="KW-0597">Phosphoprotein</keyword>
<keyword id="KW-1185">Reference proteome</keyword>
<keyword id="KW-1278">Translocase</keyword>
<keyword id="KW-0812">Transmembrane</keyword>
<keyword id="KW-1133">Transmembrane helix</keyword>
<keyword id="KW-0813">Transport</keyword>
<evidence type="ECO:0000250" key="1"/>
<evidence type="ECO:0000255" key="2"/>
<evidence type="ECO:0000256" key="3">
    <source>
        <dbReference type="SAM" id="MobiDB-lite"/>
    </source>
</evidence>
<evidence type="ECO:0000305" key="4"/>
<sequence length="674" mass="73220">MNHSNQMHHDNHESHNHHSGHAHHHGNFKVKFFVSLIFAIPIILLSPLMGVNLPFQFTFPGSEWVVLILSTILFFYGGKPFLSGGKDEIATKKPGMMTLVALGISVAYIYSLYAFYMNNFSSATGHTMDFFWELATLILIMLLGHWIEMNAVGNAGDALKKMAELLPNSAIKVMDNGQREEVKISDIMTDDIVEVKAGESIPTDGIIVQGQTSIDESLVTGESKKVQKNQNDNVIGGSINGSGTIQVKVTAVGEDGYLSQVMGLVNQAQNDKSSAELLSDKVAGYLFYFAVSVGVISFIVWMLIQNDVDFALERLVTVLVIACPHALGLAIPLVTARSTSIGAHNGLIIKNRESVEIAQHIDYVMMDKTGTLTEGNFSVNHYESFKNDLSNDTILSLFASLESQSNHPLAISIVDFAKSKNVSFTNPQDVNNIPGVGLEGLIHNKTYKITNVSYLDQHGFEYDNDLFIKLAQQGNSISYLIEDQQVIGMIAQGDQIKESSKQMVADLLSRNITPVMLTGDNNEVAHAVAKELGISDVHAQLMPEDKESIIKDYQSNGNKVMMVGDGINDAPSLIRADIGIAIGAGTDVAVDSGDIILVKSNPSDIIHFLTLSNNTMRKMVQNLWWGAGYNIVAVPLAAGILAFIGLILSPAIGAILMSLSTVIVAINAFTLKLK</sequence>
<proteinExistence type="inferred from homology"/>